<accession>A5ITT0</accession>
<evidence type="ECO:0000255" key="1">
    <source>
        <dbReference type="HAMAP-Rule" id="MF_00049"/>
    </source>
</evidence>
<sequence length="805" mass="91784">MLNYNHNQIEKKWQDYWDENKTFKTNDNLGQKKFYALDMFPYPSGAGLHVGHPEGYTATDIISRYKRMQGYNVLHPMGWDAFGLPAEQYALDTGNDPREFTKKNIQTFKRQIKELGFSYDWDREVNTTDPEYYKWTQWIFIQLYNKGLAYVDEVAVNWCPALGTVLSNEEVIDGVSERGGHPVYRKPMKQWVLKITEYADQLLADLDDLDWPESLKDMQRNWIGRSEGAKVSFDVDNTEGKVEVFTTRPDTIYGASFLVLSPEHALVNSITTDEYKEKVKAYQTEASKKSDLERTDLAKDKSGVFTGAYAINPLSGEKVQIWIADYVLSTYGTGAIMAVPAHDDRDYEFAKKFDLPIIEVIEGGNVEEAAYTGEGKHINSGELDGLENEAAITKAIQLLEQKGAGEKKVNYKLRDWLFSRQRYWGEPIPVIHWEDGTMTTVPEEELPLLLPETDEIKPSGTGESPLANIDSFVNVVDEKTGMKGRRETNTMPQWAGSCWYYLRYIDPKNENMLADPEKLKHWLPVDLYIGGVEHAVLHLLYARFWHKVLYDLGIVPTKEPFQKLFNQGMILGEGNEKMSKSKGNVINPDDIVQSHGADTLRLYEMFMGPLDAAIAWSEKGLDGSRRFLDRVWRLMVNEDGTLSSKIVTTNNKSLDKVYNQTVKKVTEDFETLGFNTAISQLMVFINECYKVDEVYKPYIEGFVKMLAPIAPHIGEELWSKLGHEESITYQPWPTYDEALLVDDEVEIVVQVNGKLRAKIKIAKDTSKEEMQEIALSNDNVKASIEGKDIMKVIAVPQKLVNIVAK</sequence>
<protein>
    <recommendedName>
        <fullName evidence="1">Leucine--tRNA ligase</fullName>
        <ecNumber evidence="1">6.1.1.4</ecNumber>
    </recommendedName>
    <alternativeName>
        <fullName evidence="1">Leucyl-tRNA synthetase</fullName>
        <shortName evidence="1">LeuRS</shortName>
    </alternativeName>
</protein>
<feature type="chain" id="PRO_1000074846" description="Leucine--tRNA ligase">
    <location>
        <begin position="1"/>
        <end position="805"/>
    </location>
</feature>
<feature type="short sequence motif" description="'HIGH' region">
    <location>
        <begin position="41"/>
        <end position="52"/>
    </location>
</feature>
<feature type="short sequence motif" description="'KMSKS' region">
    <location>
        <begin position="577"/>
        <end position="581"/>
    </location>
</feature>
<feature type="binding site" evidence="1">
    <location>
        <position position="580"/>
    </location>
    <ligand>
        <name>ATP</name>
        <dbReference type="ChEBI" id="CHEBI:30616"/>
    </ligand>
</feature>
<keyword id="KW-0030">Aminoacyl-tRNA synthetase</keyword>
<keyword id="KW-0067">ATP-binding</keyword>
<keyword id="KW-0963">Cytoplasm</keyword>
<keyword id="KW-0436">Ligase</keyword>
<keyword id="KW-0547">Nucleotide-binding</keyword>
<keyword id="KW-0648">Protein biosynthesis</keyword>
<dbReference type="EC" id="6.1.1.4" evidence="1"/>
<dbReference type="EMBL" id="CP000703">
    <property type="protein sequence ID" value="ABQ49603.1"/>
    <property type="molecule type" value="Genomic_DNA"/>
</dbReference>
<dbReference type="SMR" id="A5ITT0"/>
<dbReference type="KEGG" id="saj:SaurJH9_1813"/>
<dbReference type="HOGENOM" id="CLU_004427_0_0_9"/>
<dbReference type="GO" id="GO:0005829">
    <property type="term" value="C:cytosol"/>
    <property type="evidence" value="ECO:0007669"/>
    <property type="project" value="TreeGrafter"/>
</dbReference>
<dbReference type="GO" id="GO:0002161">
    <property type="term" value="F:aminoacyl-tRNA deacylase activity"/>
    <property type="evidence" value="ECO:0007669"/>
    <property type="project" value="InterPro"/>
</dbReference>
<dbReference type="GO" id="GO:0005524">
    <property type="term" value="F:ATP binding"/>
    <property type="evidence" value="ECO:0007669"/>
    <property type="project" value="UniProtKB-UniRule"/>
</dbReference>
<dbReference type="GO" id="GO:0004823">
    <property type="term" value="F:leucine-tRNA ligase activity"/>
    <property type="evidence" value="ECO:0007669"/>
    <property type="project" value="UniProtKB-UniRule"/>
</dbReference>
<dbReference type="GO" id="GO:0006429">
    <property type="term" value="P:leucyl-tRNA aminoacylation"/>
    <property type="evidence" value="ECO:0007669"/>
    <property type="project" value="UniProtKB-UniRule"/>
</dbReference>
<dbReference type="CDD" id="cd07958">
    <property type="entry name" value="Anticodon_Ia_Leu_BEm"/>
    <property type="match status" value="1"/>
</dbReference>
<dbReference type="CDD" id="cd00812">
    <property type="entry name" value="LeuRS_core"/>
    <property type="match status" value="1"/>
</dbReference>
<dbReference type="FunFam" id="1.10.730.10:FF:000012">
    <property type="entry name" value="Leucine--tRNA ligase"/>
    <property type="match status" value="1"/>
</dbReference>
<dbReference type="FunFam" id="1.10.730.10:FF:000018">
    <property type="entry name" value="Leucine--tRNA ligase"/>
    <property type="match status" value="1"/>
</dbReference>
<dbReference type="FunFam" id="3.10.20.590:FF:000001">
    <property type="entry name" value="Leucine--tRNA ligase"/>
    <property type="match status" value="1"/>
</dbReference>
<dbReference type="FunFam" id="3.40.50.620:FF:000056">
    <property type="entry name" value="Leucine--tRNA ligase"/>
    <property type="match status" value="1"/>
</dbReference>
<dbReference type="FunFam" id="3.40.50.620:FF:000077">
    <property type="entry name" value="Leucine--tRNA ligase"/>
    <property type="match status" value="1"/>
</dbReference>
<dbReference type="Gene3D" id="3.10.20.590">
    <property type="match status" value="1"/>
</dbReference>
<dbReference type="Gene3D" id="3.40.50.620">
    <property type="entry name" value="HUPs"/>
    <property type="match status" value="2"/>
</dbReference>
<dbReference type="Gene3D" id="1.10.730.10">
    <property type="entry name" value="Isoleucyl-tRNA Synthetase, Domain 1"/>
    <property type="match status" value="1"/>
</dbReference>
<dbReference type="HAMAP" id="MF_00049_B">
    <property type="entry name" value="Leu_tRNA_synth_B"/>
    <property type="match status" value="1"/>
</dbReference>
<dbReference type="InterPro" id="IPR001412">
    <property type="entry name" value="aa-tRNA-synth_I_CS"/>
</dbReference>
<dbReference type="InterPro" id="IPR002300">
    <property type="entry name" value="aa-tRNA-synth_Ia"/>
</dbReference>
<dbReference type="InterPro" id="IPR002302">
    <property type="entry name" value="Leu-tRNA-ligase"/>
</dbReference>
<dbReference type="InterPro" id="IPR025709">
    <property type="entry name" value="Leu_tRNA-synth_edit"/>
</dbReference>
<dbReference type="InterPro" id="IPR013155">
    <property type="entry name" value="M/V/L/I-tRNA-synth_anticd-bd"/>
</dbReference>
<dbReference type="InterPro" id="IPR015413">
    <property type="entry name" value="Methionyl/Leucyl_tRNA_Synth"/>
</dbReference>
<dbReference type="InterPro" id="IPR014729">
    <property type="entry name" value="Rossmann-like_a/b/a_fold"/>
</dbReference>
<dbReference type="InterPro" id="IPR009080">
    <property type="entry name" value="tRNAsynth_Ia_anticodon-bd"/>
</dbReference>
<dbReference type="InterPro" id="IPR009008">
    <property type="entry name" value="Val/Leu/Ile-tRNA-synth_edit"/>
</dbReference>
<dbReference type="NCBIfam" id="TIGR00396">
    <property type="entry name" value="leuS_bact"/>
    <property type="match status" value="1"/>
</dbReference>
<dbReference type="PANTHER" id="PTHR43740:SF2">
    <property type="entry name" value="LEUCINE--TRNA LIGASE, MITOCHONDRIAL"/>
    <property type="match status" value="1"/>
</dbReference>
<dbReference type="PANTHER" id="PTHR43740">
    <property type="entry name" value="LEUCYL-TRNA SYNTHETASE"/>
    <property type="match status" value="1"/>
</dbReference>
<dbReference type="Pfam" id="PF08264">
    <property type="entry name" value="Anticodon_1"/>
    <property type="match status" value="1"/>
</dbReference>
<dbReference type="Pfam" id="PF00133">
    <property type="entry name" value="tRNA-synt_1"/>
    <property type="match status" value="1"/>
</dbReference>
<dbReference type="Pfam" id="PF13603">
    <property type="entry name" value="tRNA-synt_1_2"/>
    <property type="match status" value="1"/>
</dbReference>
<dbReference type="Pfam" id="PF09334">
    <property type="entry name" value="tRNA-synt_1g"/>
    <property type="match status" value="1"/>
</dbReference>
<dbReference type="PRINTS" id="PR00985">
    <property type="entry name" value="TRNASYNTHLEU"/>
</dbReference>
<dbReference type="SUPFAM" id="SSF47323">
    <property type="entry name" value="Anticodon-binding domain of a subclass of class I aminoacyl-tRNA synthetases"/>
    <property type="match status" value="1"/>
</dbReference>
<dbReference type="SUPFAM" id="SSF52374">
    <property type="entry name" value="Nucleotidylyl transferase"/>
    <property type="match status" value="1"/>
</dbReference>
<dbReference type="SUPFAM" id="SSF50677">
    <property type="entry name" value="ValRS/IleRS/LeuRS editing domain"/>
    <property type="match status" value="1"/>
</dbReference>
<dbReference type="PROSITE" id="PS00178">
    <property type="entry name" value="AA_TRNA_LIGASE_I"/>
    <property type="match status" value="1"/>
</dbReference>
<name>SYL_STAA9</name>
<organism>
    <name type="scientific">Staphylococcus aureus (strain JH9)</name>
    <dbReference type="NCBI Taxonomy" id="359786"/>
    <lineage>
        <taxon>Bacteria</taxon>
        <taxon>Bacillati</taxon>
        <taxon>Bacillota</taxon>
        <taxon>Bacilli</taxon>
        <taxon>Bacillales</taxon>
        <taxon>Staphylococcaceae</taxon>
        <taxon>Staphylococcus</taxon>
    </lineage>
</organism>
<reference key="1">
    <citation type="submission" date="2007-05" db="EMBL/GenBank/DDBJ databases">
        <title>Complete sequence of chromosome of Staphylococcus aureus subsp. aureus JH9.</title>
        <authorList>
            <consortium name="US DOE Joint Genome Institute"/>
            <person name="Copeland A."/>
            <person name="Lucas S."/>
            <person name="Lapidus A."/>
            <person name="Barry K."/>
            <person name="Detter J.C."/>
            <person name="Glavina del Rio T."/>
            <person name="Hammon N."/>
            <person name="Israni S."/>
            <person name="Pitluck S."/>
            <person name="Chain P."/>
            <person name="Malfatti S."/>
            <person name="Shin M."/>
            <person name="Vergez L."/>
            <person name="Schmutz J."/>
            <person name="Larimer F."/>
            <person name="Land M."/>
            <person name="Hauser L."/>
            <person name="Kyrpides N."/>
            <person name="Kim E."/>
            <person name="Tomasz A."/>
            <person name="Richardson P."/>
        </authorList>
    </citation>
    <scope>NUCLEOTIDE SEQUENCE [LARGE SCALE GENOMIC DNA]</scope>
    <source>
        <strain>JH9</strain>
    </source>
</reference>
<comment type="catalytic activity">
    <reaction evidence="1">
        <text>tRNA(Leu) + L-leucine + ATP = L-leucyl-tRNA(Leu) + AMP + diphosphate</text>
        <dbReference type="Rhea" id="RHEA:11688"/>
        <dbReference type="Rhea" id="RHEA-COMP:9613"/>
        <dbReference type="Rhea" id="RHEA-COMP:9622"/>
        <dbReference type="ChEBI" id="CHEBI:30616"/>
        <dbReference type="ChEBI" id="CHEBI:33019"/>
        <dbReference type="ChEBI" id="CHEBI:57427"/>
        <dbReference type="ChEBI" id="CHEBI:78442"/>
        <dbReference type="ChEBI" id="CHEBI:78494"/>
        <dbReference type="ChEBI" id="CHEBI:456215"/>
        <dbReference type="EC" id="6.1.1.4"/>
    </reaction>
</comment>
<comment type="subcellular location">
    <subcellularLocation>
        <location evidence="1">Cytoplasm</location>
    </subcellularLocation>
</comment>
<comment type="similarity">
    <text evidence="1">Belongs to the class-I aminoacyl-tRNA synthetase family.</text>
</comment>
<gene>
    <name evidence="1" type="primary">leuS</name>
    <name type="ordered locus">SaurJH9_1813</name>
</gene>
<proteinExistence type="inferred from homology"/>